<accession>Q9Y5G0</accession>
<accession>Q52LK8</accession>
<accession>Q9Y5C6</accession>
<name>PCDGH_HUMAN</name>
<proteinExistence type="evidence at protein level"/>
<keyword id="KW-0025">Alternative splicing</keyword>
<keyword id="KW-0106">Calcium</keyword>
<keyword id="KW-0130">Cell adhesion</keyword>
<keyword id="KW-1003">Cell membrane</keyword>
<keyword id="KW-0325">Glycoprotein</keyword>
<keyword id="KW-0472">Membrane</keyword>
<keyword id="KW-1267">Proteomics identification</keyword>
<keyword id="KW-1185">Reference proteome</keyword>
<keyword id="KW-0677">Repeat</keyword>
<keyword id="KW-0732">Signal</keyword>
<keyword id="KW-0812">Transmembrane</keyword>
<keyword id="KW-1133">Transmembrane helix</keyword>
<organism>
    <name type="scientific">Homo sapiens</name>
    <name type="common">Human</name>
    <dbReference type="NCBI Taxonomy" id="9606"/>
    <lineage>
        <taxon>Eukaryota</taxon>
        <taxon>Metazoa</taxon>
        <taxon>Chordata</taxon>
        <taxon>Craniata</taxon>
        <taxon>Vertebrata</taxon>
        <taxon>Euteleostomi</taxon>
        <taxon>Mammalia</taxon>
        <taxon>Eutheria</taxon>
        <taxon>Euarchontoglires</taxon>
        <taxon>Primates</taxon>
        <taxon>Haplorrhini</taxon>
        <taxon>Catarrhini</taxon>
        <taxon>Hominidae</taxon>
        <taxon>Homo</taxon>
    </lineage>
</organism>
<protein>
    <recommendedName>
        <fullName>Protocadherin gamma-B5</fullName>
        <shortName>PCDH-gamma-B5</shortName>
    </recommendedName>
</protein>
<reference key="1">
    <citation type="journal article" date="1999" name="Cell">
        <title>A striking organization of a large family of human neural cadherin-like cell adhesion genes.</title>
        <authorList>
            <person name="Wu Q."/>
            <person name="Maniatis T."/>
        </authorList>
    </citation>
    <scope>NUCLEOTIDE SEQUENCE [MRNA] (ISOFORMS 1 AND 2)</scope>
    <source>
        <tissue>Brain</tissue>
    </source>
</reference>
<reference key="2">
    <citation type="submission" date="2005-09" db="EMBL/GenBank/DDBJ databases">
        <authorList>
            <person name="Mural R.J."/>
            <person name="Istrail S."/>
            <person name="Sutton G.G."/>
            <person name="Florea L."/>
            <person name="Halpern A.L."/>
            <person name="Mobarry C.M."/>
            <person name="Lippert R."/>
            <person name="Walenz B."/>
            <person name="Shatkay H."/>
            <person name="Dew I."/>
            <person name="Miller J.R."/>
            <person name="Flanigan M.J."/>
            <person name="Edwards N.J."/>
            <person name="Bolanos R."/>
            <person name="Fasulo D."/>
            <person name="Halldorsson B.V."/>
            <person name="Hannenhalli S."/>
            <person name="Turner R."/>
            <person name="Yooseph S."/>
            <person name="Lu F."/>
            <person name="Nusskern D.R."/>
            <person name="Shue B.C."/>
            <person name="Zheng X.H."/>
            <person name="Zhong F."/>
            <person name="Delcher A.L."/>
            <person name="Huson D.H."/>
            <person name="Kravitz S.A."/>
            <person name="Mouchard L."/>
            <person name="Reinert K."/>
            <person name="Remington K.A."/>
            <person name="Clark A.G."/>
            <person name="Waterman M.S."/>
            <person name="Eichler E.E."/>
            <person name="Adams M.D."/>
            <person name="Hunkapiller M.W."/>
            <person name="Myers E.W."/>
            <person name="Venter J.C."/>
        </authorList>
    </citation>
    <scope>NUCLEOTIDE SEQUENCE [LARGE SCALE GENOMIC DNA]</scope>
</reference>
<reference key="3">
    <citation type="journal article" date="2004" name="Genome Res.">
        <title>The status, quality, and expansion of the NIH full-length cDNA project: the Mammalian Gene Collection (MGC).</title>
        <authorList>
            <consortium name="The MGC Project Team"/>
        </authorList>
    </citation>
    <scope>NUCLEOTIDE SEQUENCE [LARGE SCALE MRNA] (ISOFORM 2)</scope>
    <source>
        <tissue>Brain</tissue>
    </source>
</reference>
<evidence type="ECO:0000250" key="1"/>
<evidence type="ECO:0000255" key="2"/>
<evidence type="ECO:0000255" key="3">
    <source>
        <dbReference type="PROSITE-ProRule" id="PRU00043"/>
    </source>
</evidence>
<evidence type="ECO:0000256" key="4">
    <source>
        <dbReference type="SAM" id="MobiDB-lite"/>
    </source>
</evidence>
<evidence type="ECO:0000303" key="5">
    <source>
    </source>
</evidence>
<evidence type="ECO:0000303" key="6">
    <source>
    </source>
</evidence>
<gene>
    <name type="primary">PCDHGB5</name>
</gene>
<sequence length="923" mass="99875">MGSGAGELGRAERLPVLFLFLLSLFCPALCEQIRYRIPEEMPKGSVVGNLATDLGFSVQELPTRKLRVSSEKPYFTVSAESGELLVSSRLDREEICGKKPACALEFEAVAENPLNFYHVNVEIEDINDHTPKFTQNSFELQISESAQPGTRFILEVAEDADIGLNSLQKYKLSLNPSFSLIIKEKQDGSKYPELALEKTLDREQQSYHRLVLTALDGGHPPLSGTTELRIQVTDANDNPPVFNRDVYRVSLRENVPPGTTVLQVSATDQDEGINSEITYSFYRTGQIFSLNSKSGEITTQKKLDFEETKEYSMVVEGRDGGGLVAQCTVEINIQDENDNSPEVTFHSLLEMILENAVPGTLIALIKIHDQDSGENGEVNCQLQGEVPFKIISSSKNSYKLVTDGTLDREQTPEYNVTITATDRGKPPLSSSISVILHIRDVNDNAPVFHQASYLVSVPENNPPGASIAQVCASDLDLGLNGQVSYSIMASDLEPLALASYVSMSAQSGVVFAQRAFDYEQLRTFELTLQARDQGSPALSANVSLRVLVGDRNDNAPRVLYPALGPDGSALFDMVPRAAEPGYLVTKVVAVDADSGHNAWLSYHVLQASEPGLFSLGLRTGEVRTARALGDRDAARQRLLVAVRDGGQPPLSATATLHLVFADSLQEVLPDITDRPVPSDPQAELQFYLVVALALISVLFLLAVILAVALRLRRSSSPAAWSCFQPGLCVKSGPVVPPNYSQGTLPYSYNLCVAHTGKTEFNFLKCSEQLSSGQDILCGDSSGALFPLCNSSESTSHPELQAPPNTDWRFSQAQRPGTSGSQNGDDTGTWPNNQFDTEMLQAMILASASEAADGSSTLGGGAGTMGLSARYGPQFTLQHVPDYRQNVYIPGSNATLTNAAGKRDGKAPAGGNGNKKKSGKKEKK</sequence>
<feature type="signal peptide" evidence="2">
    <location>
        <begin position="1"/>
        <end position="30"/>
    </location>
</feature>
<feature type="chain" id="PRO_0000003979" description="Protocadherin gamma-B5">
    <location>
        <begin position="31"/>
        <end position="923"/>
    </location>
</feature>
<feature type="topological domain" description="Extracellular" evidence="2">
    <location>
        <begin position="31"/>
        <end position="687"/>
    </location>
</feature>
<feature type="transmembrane region" description="Helical" evidence="2">
    <location>
        <begin position="688"/>
        <end position="708"/>
    </location>
</feature>
<feature type="topological domain" description="Cytoplasmic" evidence="2">
    <location>
        <begin position="709"/>
        <end position="923"/>
    </location>
</feature>
<feature type="domain" description="Cadherin 1" evidence="3">
    <location>
        <begin position="31"/>
        <end position="133"/>
    </location>
</feature>
<feature type="domain" description="Cadherin 2" evidence="3">
    <location>
        <begin position="134"/>
        <end position="242"/>
    </location>
</feature>
<feature type="domain" description="Cadherin 3" evidence="3">
    <location>
        <begin position="243"/>
        <end position="343"/>
    </location>
</feature>
<feature type="domain" description="Cadherin 4" evidence="3">
    <location>
        <begin position="344"/>
        <end position="448"/>
    </location>
</feature>
<feature type="domain" description="Cadherin 5" evidence="3">
    <location>
        <begin position="449"/>
        <end position="558"/>
    </location>
</feature>
<feature type="domain" description="Cadherin 6" evidence="3">
    <location>
        <begin position="566"/>
        <end position="671"/>
    </location>
</feature>
<feature type="region of interest" description="Disordered" evidence="4">
    <location>
        <begin position="794"/>
        <end position="832"/>
    </location>
</feature>
<feature type="region of interest" description="Disordered" evidence="4">
    <location>
        <begin position="893"/>
        <end position="923"/>
    </location>
</feature>
<feature type="compositionally biased region" description="Polar residues" evidence="4">
    <location>
        <begin position="807"/>
        <end position="832"/>
    </location>
</feature>
<feature type="compositionally biased region" description="Basic residues" evidence="4">
    <location>
        <begin position="913"/>
        <end position="923"/>
    </location>
</feature>
<feature type="glycosylation site" description="N-linked (GlcNAc...) asparagine" evidence="2">
    <location>
        <position position="415"/>
    </location>
</feature>
<feature type="glycosylation site" description="N-linked (GlcNAc...) asparagine" evidence="2">
    <location>
        <position position="541"/>
    </location>
</feature>
<feature type="splice variant" id="VSP_008692" description="In isoform 2." evidence="5 6">
    <original>QAPPNTDWRFSQAQRPGTS</original>
    <variation>VSFIYVYSFSLPTQFSVFT</variation>
    <location>
        <begin position="800"/>
        <end position="818"/>
    </location>
</feature>
<feature type="splice variant" id="VSP_008693" description="In isoform 2." evidence="5 6">
    <location>
        <begin position="819"/>
        <end position="923"/>
    </location>
</feature>
<feature type="sequence variant" id="VAR_048571" description="In dbSNP:rs6867460.">
    <original>G</original>
    <variation>S</variation>
    <location>
        <position position="188"/>
    </location>
</feature>
<dbReference type="EMBL" id="AF152334">
    <property type="protein sequence ID" value="AAD43728.1"/>
    <property type="molecule type" value="mRNA"/>
</dbReference>
<dbReference type="EMBL" id="AF152521">
    <property type="protein sequence ID" value="AAD43781.1"/>
    <property type="molecule type" value="mRNA"/>
</dbReference>
<dbReference type="EMBL" id="CH471062">
    <property type="protein sequence ID" value="EAW61948.1"/>
    <property type="molecule type" value="Genomic_DNA"/>
</dbReference>
<dbReference type="EMBL" id="BC093877">
    <property type="protein sequence ID" value="AAH93877.1"/>
    <property type="molecule type" value="mRNA"/>
</dbReference>
<dbReference type="EMBL" id="BC093879">
    <property type="protein sequence ID" value="AAH93879.1"/>
    <property type="molecule type" value="mRNA"/>
</dbReference>
<dbReference type="CCDS" id="CCDS75339.1">
    <molecule id="Q9Y5G0-1"/>
</dbReference>
<dbReference type="CCDS" id="CCDS75340.1">
    <molecule id="Q9Y5G0-2"/>
</dbReference>
<dbReference type="RefSeq" id="NP_061748.1">
    <molecule id="Q9Y5G0-1"/>
    <property type="nucleotide sequence ID" value="NM_018925.3"/>
</dbReference>
<dbReference type="RefSeq" id="NP_115270.1">
    <molecule id="Q9Y5G0-2"/>
    <property type="nucleotide sequence ID" value="NM_032099.1"/>
</dbReference>
<dbReference type="SMR" id="Q9Y5G0"/>
<dbReference type="BioGRID" id="121041">
    <property type="interactions" value="54"/>
</dbReference>
<dbReference type="FunCoup" id="Q9Y5G0">
    <property type="interactions" value="130"/>
</dbReference>
<dbReference type="IntAct" id="Q9Y5G0">
    <property type="interactions" value="41"/>
</dbReference>
<dbReference type="MINT" id="Q9Y5G0"/>
<dbReference type="STRING" id="9606.ENSP00000478258"/>
<dbReference type="GlyConnect" id="1689">
    <property type="glycosylation" value="4 N-Linked glycans (1 site)"/>
</dbReference>
<dbReference type="GlyCosmos" id="Q9Y5G0">
    <property type="glycosylation" value="2 sites, 3 glycans"/>
</dbReference>
<dbReference type="GlyGen" id="Q9Y5G0">
    <property type="glycosylation" value="3 sites, 3 N-linked glycans (1 site), 1 O-linked glycan (1 site)"/>
</dbReference>
<dbReference type="iPTMnet" id="Q9Y5G0"/>
<dbReference type="PhosphoSitePlus" id="Q9Y5G0"/>
<dbReference type="SwissPalm" id="Q9Y5G0"/>
<dbReference type="BioMuta" id="PCDHGB5"/>
<dbReference type="DMDM" id="37999830"/>
<dbReference type="jPOST" id="Q9Y5G0"/>
<dbReference type="MassIVE" id="Q9Y5G0"/>
<dbReference type="PaxDb" id="9606-ENSP00000478258"/>
<dbReference type="PeptideAtlas" id="Q9Y5G0"/>
<dbReference type="ProteomicsDB" id="86361">
    <molecule id="Q9Y5G0-1"/>
</dbReference>
<dbReference type="ProteomicsDB" id="86362">
    <molecule id="Q9Y5G0-2"/>
</dbReference>
<dbReference type="Antibodypedia" id="72859">
    <property type="antibodies" value="33 antibodies from 11 providers"/>
</dbReference>
<dbReference type="DNASU" id="56101"/>
<dbReference type="Ensembl" id="ENST00000617380.2">
    <molecule id="Q9Y5G0-1"/>
    <property type="protein sequence ID" value="ENSP00000478258.1"/>
    <property type="gene ID" value="ENSG00000276547.2"/>
</dbReference>
<dbReference type="Ensembl" id="ENST00000621169.1">
    <molecule id="Q9Y5G0-2"/>
    <property type="protein sequence ID" value="ENSP00000484888.1"/>
    <property type="gene ID" value="ENSG00000276547.2"/>
</dbReference>
<dbReference type="GeneID" id="56101"/>
<dbReference type="KEGG" id="hsa:56101"/>
<dbReference type="MANE-Select" id="ENST00000617380.2">
    <property type="protein sequence ID" value="ENSP00000478258.1"/>
    <property type="RefSeq nucleotide sequence ID" value="NM_018925.3"/>
    <property type="RefSeq protein sequence ID" value="NP_061748.1"/>
</dbReference>
<dbReference type="UCSC" id="uc003lkf.3">
    <molecule id="Q9Y5G0-1"/>
    <property type="organism name" value="human"/>
</dbReference>
<dbReference type="AGR" id="HGNC:8712"/>
<dbReference type="CTD" id="56101"/>
<dbReference type="DisGeNET" id="56101"/>
<dbReference type="GeneCards" id="PCDHGB5"/>
<dbReference type="HGNC" id="HGNC:8712">
    <property type="gene designation" value="PCDHGB5"/>
</dbReference>
<dbReference type="HPA" id="ENSG00000276547">
    <property type="expression patterns" value="Tissue enriched (parathyroid)"/>
</dbReference>
<dbReference type="MalaCards" id="PCDHGB5"/>
<dbReference type="MIM" id="604968">
    <property type="type" value="gene"/>
</dbReference>
<dbReference type="MIM" id="606302">
    <property type="type" value="gene"/>
</dbReference>
<dbReference type="neXtProt" id="NX_Q9Y5G0"/>
<dbReference type="OpenTargets" id="ENSG00000276547"/>
<dbReference type="PharmGKB" id="PA33060"/>
<dbReference type="VEuPathDB" id="HostDB:ENSG00000276547"/>
<dbReference type="eggNOG" id="KOG3594">
    <property type="taxonomic scope" value="Eukaryota"/>
</dbReference>
<dbReference type="GeneTree" id="ENSGT00940000156683"/>
<dbReference type="HOGENOM" id="CLU_006480_3_0_1"/>
<dbReference type="InParanoid" id="Q9Y5G0"/>
<dbReference type="OMA" id="RFPKEEY"/>
<dbReference type="OrthoDB" id="6252479at2759"/>
<dbReference type="PAN-GO" id="Q9Y5G0">
    <property type="GO annotations" value="2 GO annotations based on evolutionary models"/>
</dbReference>
<dbReference type="PhylomeDB" id="Q9Y5G0"/>
<dbReference type="PathwayCommons" id="Q9Y5G0"/>
<dbReference type="SignaLink" id="Q9Y5G0"/>
<dbReference type="SIGNOR" id="Q9Y5G0"/>
<dbReference type="BioGRID-ORCS" id="56101">
    <property type="hits" value="6 hits in 238 CRISPR screens"/>
</dbReference>
<dbReference type="GenomeRNAi" id="56101"/>
<dbReference type="Pharos" id="Q9Y5G0">
    <property type="development level" value="Tdark"/>
</dbReference>
<dbReference type="PRO" id="PR:Q9Y5G0"/>
<dbReference type="Proteomes" id="UP000005640">
    <property type="component" value="Chromosome 5"/>
</dbReference>
<dbReference type="RNAct" id="Q9Y5G0">
    <property type="molecule type" value="protein"/>
</dbReference>
<dbReference type="Bgee" id="ENSG00000276547">
    <property type="expression patterns" value="Expressed in male germ line stem cell (sensu Vertebrata) in testis and 95 other cell types or tissues"/>
</dbReference>
<dbReference type="GO" id="GO:0070062">
    <property type="term" value="C:extracellular exosome"/>
    <property type="evidence" value="ECO:0007005"/>
    <property type="project" value="UniProtKB"/>
</dbReference>
<dbReference type="GO" id="GO:0005886">
    <property type="term" value="C:plasma membrane"/>
    <property type="evidence" value="ECO:0000318"/>
    <property type="project" value="GO_Central"/>
</dbReference>
<dbReference type="GO" id="GO:0005509">
    <property type="term" value="F:calcium ion binding"/>
    <property type="evidence" value="ECO:0007669"/>
    <property type="project" value="InterPro"/>
</dbReference>
<dbReference type="GO" id="GO:0007155">
    <property type="term" value="P:cell adhesion"/>
    <property type="evidence" value="ECO:0000318"/>
    <property type="project" value="GO_Central"/>
</dbReference>
<dbReference type="GO" id="GO:0007156">
    <property type="term" value="P:homophilic cell adhesion via plasma membrane adhesion molecules"/>
    <property type="evidence" value="ECO:0007669"/>
    <property type="project" value="InterPro"/>
</dbReference>
<dbReference type="GO" id="GO:0007399">
    <property type="term" value="P:nervous system development"/>
    <property type="evidence" value="ECO:0007669"/>
    <property type="project" value="UniProtKB-ARBA"/>
</dbReference>
<dbReference type="CDD" id="cd11304">
    <property type="entry name" value="Cadherin_repeat"/>
    <property type="match status" value="6"/>
</dbReference>
<dbReference type="FunFam" id="2.60.40.60:FF:000004">
    <property type="entry name" value="Protocadherin 1 gamma 2"/>
    <property type="match status" value="1"/>
</dbReference>
<dbReference type="FunFam" id="2.60.40.60:FF:000001">
    <property type="entry name" value="Protocadherin alpha 2"/>
    <property type="match status" value="1"/>
</dbReference>
<dbReference type="FunFam" id="2.60.40.60:FF:000002">
    <property type="entry name" value="Protocadherin alpha 2"/>
    <property type="match status" value="1"/>
</dbReference>
<dbReference type="FunFam" id="2.60.40.60:FF:000006">
    <property type="entry name" value="Protocadherin alpha 2"/>
    <property type="match status" value="1"/>
</dbReference>
<dbReference type="FunFam" id="2.60.40.60:FF:000129">
    <property type="entry name" value="protocadherin alpha-C2 isoform X1"/>
    <property type="match status" value="1"/>
</dbReference>
<dbReference type="FunFam" id="2.60.40.60:FF:000018">
    <property type="entry name" value="Protocadherin gamma c3"/>
    <property type="match status" value="1"/>
</dbReference>
<dbReference type="Gene3D" id="2.60.40.60">
    <property type="entry name" value="Cadherins"/>
    <property type="match status" value="6"/>
</dbReference>
<dbReference type="InterPro" id="IPR002126">
    <property type="entry name" value="Cadherin-like_dom"/>
</dbReference>
<dbReference type="InterPro" id="IPR015919">
    <property type="entry name" value="Cadherin-like_sf"/>
</dbReference>
<dbReference type="InterPro" id="IPR032455">
    <property type="entry name" value="Cadherin_C"/>
</dbReference>
<dbReference type="InterPro" id="IPR031904">
    <property type="entry name" value="Cadherin_CBD"/>
</dbReference>
<dbReference type="InterPro" id="IPR020894">
    <property type="entry name" value="Cadherin_CS"/>
</dbReference>
<dbReference type="InterPro" id="IPR013164">
    <property type="entry name" value="Cadherin_N"/>
</dbReference>
<dbReference type="InterPro" id="IPR050174">
    <property type="entry name" value="Protocadherin/Cadherin-CA"/>
</dbReference>
<dbReference type="PANTHER" id="PTHR24028">
    <property type="entry name" value="CADHERIN-87A"/>
    <property type="match status" value="1"/>
</dbReference>
<dbReference type="PANTHER" id="PTHR24028:SF73">
    <property type="entry name" value="PROTOCADHERIN GAMMA-B3-RELATED"/>
    <property type="match status" value="1"/>
</dbReference>
<dbReference type="Pfam" id="PF00028">
    <property type="entry name" value="Cadherin"/>
    <property type="match status" value="5"/>
</dbReference>
<dbReference type="Pfam" id="PF08266">
    <property type="entry name" value="Cadherin_2"/>
    <property type="match status" value="1"/>
</dbReference>
<dbReference type="Pfam" id="PF16492">
    <property type="entry name" value="Cadherin_C_2"/>
    <property type="match status" value="1"/>
</dbReference>
<dbReference type="Pfam" id="PF15974">
    <property type="entry name" value="Cadherin_tail"/>
    <property type="match status" value="1"/>
</dbReference>
<dbReference type="PRINTS" id="PR00205">
    <property type="entry name" value="CADHERIN"/>
</dbReference>
<dbReference type="SMART" id="SM00112">
    <property type="entry name" value="CA"/>
    <property type="match status" value="6"/>
</dbReference>
<dbReference type="SUPFAM" id="SSF49313">
    <property type="entry name" value="Cadherin-like"/>
    <property type="match status" value="6"/>
</dbReference>
<dbReference type="PROSITE" id="PS00232">
    <property type="entry name" value="CADHERIN_1"/>
    <property type="match status" value="5"/>
</dbReference>
<dbReference type="PROSITE" id="PS50268">
    <property type="entry name" value="CADHERIN_2"/>
    <property type="match status" value="6"/>
</dbReference>
<comment type="function">
    <text>Potential calcium-dependent cell-adhesion protein. May be involved in the establishment and maintenance of specific neuronal connections in the brain.</text>
</comment>
<comment type="subcellular location">
    <subcellularLocation>
        <location evidence="1">Cell membrane</location>
        <topology evidence="1">Single-pass type I membrane protein</topology>
    </subcellularLocation>
</comment>
<comment type="alternative products">
    <event type="alternative splicing"/>
    <isoform>
        <id>Q9Y5G0-1</id>
        <name>1</name>
        <sequence type="displayed"/>
    </isoform>
    <isoform>
        <id>Q9Y5G0-2</id>
        <name>2</name>
        <name>Short</name>
        <sequence type="described" ref="VSP_008692 VSP_008693"/>
    </isoform>
</comment>